<reference key="1">
    <citation type="submission" date="2009-01" db="EMBL/GenBank/DDBJ databases">
        <title>Complete sequence of chromosome of Methylobacterium nodulans ORS 2060.</title>
        <authorList>
            <consortium name="US DOE Joint Genome Institute"/>
            <person name="Lucas S."/>
            <person name="Copeland A."/>
            <person name="Lapidus A."/>
            <person name="Glavina del Rio T."/>
            <person name="Dalin E."/>
            <person name="Tice H."/>
            <person name="Bruce D."/>
            <person name="Goodwin L."/>
            <person name="Pitluck S."/>
            <person name="Sims D."/>
            <person name="Brettin T."/>
            <person name="Detter J.C."/>
            <person name="Han C."/>
            <person name="Larimer F."/>
            <person name="Land M."/>
            <person name="Hauser L."/>
            <person name="Kyrpides N."/>
            <person name="Ivanova N."/>
            <person name="Marx C.J."/>
            <person name="Richardson P."/>
        </authorList>
    </citation>
    <scope>NUCLEOTIDE SEQUENCE [LARGE SCALE GENOMIC DNA]</scope>
    <source>
        <strain>LMG 21967 / CNCM I-2342 / ORS 2060</strain>
    </source>
</reference>
<name>EFTS_METNO</name>
<proteinExistence type="inferred from homology"/>
<accession>B8IQY5</accession>
<sequence length="307" mass="32311">MANITAAMVKDLREKTGAGMMDCKSALNETAGDIEAAVDWLRKKGLAKAAKKAGRVAAEGLVAVESAGRHAAVVEVNSETDFVARNDSFQAFVREAAKVALNAEGGVEALEAAHFPGSQTTVKDRLQELIATIGENMTLRRTAKLTVEKGVIATYVHSQVSEGLGKIGVLVALESDGDVGFLSTLGRQIAMHVAATNPLALDATGIDQATIERESNILREKNAGKPDHVLAKIVESGLKSYYKEVTLLEQPFVHDTSKTVSQVLKEAEGKAGGPVKLAGFVRYALGEGIEKEEGPDFASEVAAAAKG</sequence>
<keyword id="KW-0963">Cytoplasm</keyword>
<keyword id="KW-0251">Elongation factor</keyword>
<keyword id="KW-0648">Protein biosynthesis</keyword>
<keyword id="KW-1185">Reference proteome</keyword>
<comment type="function">
    <text evidence="1">Associates with the EF-Tu.GDP complex and induces the exchange of GDP to GTP. It remains bound to the aminoacyl-tRNA.EF-Tu.GTP complex up to the GTP hydrolysis stage on the ribosome.</text>
</comment>
<comment type="subcellular location">
    <subcellularLocation>
        <location evidence="1">Cytoplasm</location>
    </subcellularLocation>
</comment>
<comment type="similarity">
    <text evidence="1">Belongs to the EF-Ts family.</text>
</comment>
<dbReference type="EMBL" id="CP001349">
    <property type="protein sequence ID" value="ACL56687.1"/>
    <property type="molecule type" value="Genomic_DNA"/>
</dbReference>
<dbReference type="RefSeq" id="WP_015928380.1">
    <property type="nucleotide sequence ID" value="NC_011894.1"/>
</dbReference>
<dbReference type="SMR" id="B8IQY5"/>
<dbReference type="STRING" id="460265.Mnod_1697"/>
<dbReference type="KEGG" id="mno:Mnod_1697"/>
<dbReference type="eggNOG" id="COG0264">
    <property type="taxonomic scope" value="Bacteria"/>
</dbReference>
<dbReference type="HOGENOM" id="CLU_047155_2_0_5"/>
<dbReference type="OrthoDB" id="9808348at2"/>
<dbReference type="Proteomes" id="UP000008207">
    <property type="component" value="Chromosome"/>
</dbReference>
<dbReference type="GO" id="GO:0005737">
    <property type="term" value="C:cytoplasm"/>
    <property type="evidence" value="ECO:0007669"/>
    <property type="project" value="UniProtKB-SubCell"/>
</dbReference>
<dbReference type="GO" id="GO:0003746">
    <property type="term" value="F:translation elongation factor activity"/>
    <property type="evidence" value="ECO:0007669"/>
    <property type="project" value="UniProtKB-UniRule"/>
</dbReference>
<dbReference type="CDD" id="cd14275">
    <property type="entry name" value="UBA_EF-Ts"/>
    <property type="match status" value="1"/>
</dbReference>
<dbReference type="FunFam" id="1.10.8.10:FF:000001">
    <property type="entry name" value="Elongation factor Ts"/>
    <property type="match status" value="1"/>
</dbReference>
<dbReference type="Gene3D" id="1.10.286.20">
    <property type="match status" value="1"/>
</dbReference>
<dbReference type="Gene3D" id="1.10.8.10">
    <property type="entry name" value="DNA helicase RuvA subunit, C-terminal domain"/>
    <property type="match status" value="1"/>
</dbReference>
<dbReference type="Gene3D" id="3.30.479.20">
    <property type="entry name" value="Elongation factor Ts, dimerisation domain"/>
    <property type="match status" value="2"/>
</dbReference>
<dbReference type="HAMAP" id="MF_00050">
    <property type="entry name" value="EF_Ts"/>
    <property type="match status" value="1"/>
</dbReference>
<dbReference type="InterPro" id="IPR036402">
    <property type="entry name" value="EF-Ts_dimer_sf"/>
</dbReference>
<dbReference type="InterPro" id="IPR001816">
    <property type="entry name" value="Transl_elong_EFTs/EF1B"/>
</dbReference>
<dbReference type="InterPro" id="IPR014039">
    <property type="entry name" value="Transl_elong_EFTs/EF1B_dimer"/>
</dbReference>
<dbReference type="InterPro" id="IPR018101">
    <property type="entry name" value="Transl_elong_Ts_CS"/>
</dbReference>
<dbReference type="InterPro" id="IPR009060">
    <property type="entry name" value="UBA-like_sf"/>
</dbReference>
<dbReference type="NCBIfam" id="TIGR00116">
    <property type="entry name" value="tsf"/>
    <property type="match status" value="1"/>
</dbReference>
<dbReference type="PANTHER" id="PTHR11741">
    <property type="entry name" value="ELONGATION FACTOR TS"/>
    <property type="match status" value="1"/>
</dbReference>
<dbReference type="PANTHER" id="PTHR11741:SF0">
    <property type="entry name" value="ELONGATION FACTOR TS, MITOCHONDRIAL"/>
    <property type="match status" value="1"/>
</dbReference>
<dbReference type="Pfam" id="PF00889">
    <property type="entry name" value="EF_TS"/>
    <property type="match status" value="1"/>
</dbReference>
<dbReference type="SUPFAM" id="SSF54713">
    <property type="entry name" value="Elongation factor Ts (EF-Ts), dimerisation domain"/>
    <property type="match status" value="2"/>
</dbReference>
<dbReference type="SUPFAM" id="SSF46934">
    <property type="entry name" value="UBA-like"/>
    <property type="match status" value="1"/>
</dbReference>
<dbReference type="PROSITE" id="PS01126">
    <property type="entry name" value="EF_TS_1"/>
    <property type="match status" value="1"/>
</dbReference>
<dbReference type="PROSITE" id="PS01127">
    <property type="entry name" value="EF_TS_2"/>
    <property type="match status" value="1"/>
</dbReference>
<protein>
    <recommendedName>
        <fullName evidence="1">Elongation factor Ts</fullName>
        <shortName evidence="1">EF-Ts</shortName>
    </recommendedName>
</protein>
<organism>
    <name type="scientific">Methylobacterium nodulans (strain LMG 21967 / CNCM I-2342 / ORS 2060)</name>
    <dbReference type="NCBI Taxonomy" id="460265"/>
    <lineage>
        <taxon>Bacteria</taxon>
        <taxon>Pseudomonadati</taxon>
        <taxon>Pseudomonadota</taxon>
        <taxon>Alphaproteobacteria</taxon>
        <taxon>Hyphomicrobiales</taxon>
        <taxon>Methylobacteriaceae</taxon>
        <taxon>Methylobacterium</taxon>
    </lineage>
</organism>
<evidence type="ECO:0000255" key="1">
    <source>
        <dbReference type="HAMAP-Rule" id="MF_00050"/>
    </source>
</evidence>
<feature type="chain" id="PRO_1000117588" description="Elongation factor Ts">
    <location>
        <begin position="1"/>
        <end position="307"/>
    </location>
</feature>
<feature type="region of interest" description="Involved in Mg(2+) ion dislocation from EF-Tu" evidence="1">
    <location>
        <begin position="80"/>
        <end position="83"/>
    </location>
</feature>
<gene>
    <name evidence="1" type="primary">tsf</name>
    <name type="ordered locus">Mnod_1697</name>
</gene>